<reference key="1">
    <citation type="journal article" date="2008" name="J. Bacteriol.">
        <title>The pangenome structure of Escherichia coli: comparative genomic analysis of E. coli commensal and pathogenic isolates.</title>
        <authorList>
            <person name="Rasko D.A."/>
            <person name="Rosovitz M.J."/>
            <person name="Myers G.S.A."/>
            <person name="Mongodin E.F."/>
            <person name="Fricke W.F."/>
            <person name="Gajer P."/>
            <person name="Crabtree J."/>
            <person name="Sebaihia M."/>
            <person name="Thomson N.R."/>
            <person name="Chaudhuri R."/>
            <person name="Henderson I.R."/>
            <person name="Sperandio V."/>
            <person name="Ravel J."/>
        </authorList>
    </citation>
    <scope>NUCLEOTIDE SEQUENCE [LARGE SCALE GENOMIC DNA]</scope>
    <source>
        <strain>E24377A / ETEC</strain>
    </source>
</reference>
<evidence type="ECO:0000255" key="1">
    <source>
        <dbReference type="HAMAP-Rule" id="MF_00069"/>
    </source>
</evidence>
<keyword id="KW-0001">2Fe-2S</keyword>
<keyword id="KW-0963">Cytoplasm</keyword>
<keyword id="KW-0408">Iron</keyword>
<keyword id="KW-0411">Iron-sulfur</keyword>
<keyword id="KW-0479">Metal-binding</keyword>
<keyword id="KW-0560">Oxidoreductase</keyword>
<keyword id="KW-1185">Reference proteome</keyword>
<organism>
    <name type="scientific">Escherichia coli O139:H28 (strain E24377A / ETEC)</name>
    <dbReference type="NCBI Taxonomy" id="331111"/>
    <lineage>
        <taxon>Bacteria</taxon>
        <taxon>Pseudomonadati</taxon>
        <taxon>Pseudomonadota</taxon>
        <taxon>Gammaproteobacteria</taxon>
        <taxon>Enterobacterales</taxon>
        <taxon>Enterobacteriaceae</taxon>
        <taxon>Escherichia</taxon>
    </lineage>
</organism>
<dbReference type="EC" id="1.7.99.1" evidence="1"/>
<dbReference type="EMBL" id="CP000800">
    <property type="protein sequence ID" value="ABV21151.1"/>
    <property type="molecule type" value="Genomic_DNA"/>
</dbReference>
<dbReference type="RefSeq" id="WP_000458834.1">
    <property type="nucleotide sequence ID" value="NC_009801.1"/>
</dbReference>
<dbReference type="SMR" id="A7ZJU2"/>
<dbReference type="KEGG" id="ecw:EcE24377A_0946"/>
<dbReference type="HOGENOM" id="CLU_038344_2_0_6"/>
<dbReference type="Proteomes" id="UP000001122">
    <property type="component" value="Chromosome"/>
</dbReference>
<dbReference type="GO" id="GO:0005737">
    <property type="term" value="C:cytoplasm"/>
    <property type="evidence" value="ECO:0007669"/>
    <property type="project" value="UniProtKB-SubCell"/>
</dbReference>
<dbReference type="GO" id="GO:0051537">
    <property type="term" value="F:2 iron, 2 sulfur cluster binding"/>
    <property type="evidence" value="ECO:0007669"/>
    <property type="project" value="UniProtKB-KW"/>
</dbReference>
<dbReference type="GO" id="GO:0050418">
    <property type="term" value="F:hydroxylamine reductase activity"/>
    <property type="evidence" value="ECO:0007669"/>
    <property type="project" value="UniProtKB-UniRule"/>
</dbReference>
<dbReference type="GO" id="GO:0046872">
    <property type="term" value="F:metal ion binding"/>
    <property type="evidence" value="ECO:0007669"/>
    <property type="project" value="UniProtKB-KW"/>
</dbReference>
<dbReference type="GO" id="GO:0004601">
    <property type="term" value="F:peroxidase activity"/>
    <property type="evidence" value="ECO:0007669"/>
    <property type="project" value="TreeGrafter"/>
</dbReference>
<dbReference type="GO" id="GO:0042542">
    <property type="term" value="P:response to hydrogen peroxide"/>
    <property type="evidence" value="ECO:0007669"/>
    <property type="project" value="TreeGrafter"/>
</dbReference>
<dbReference type="CDD" id="cd01914">
    <property type="entry name" value="HCP"/>
    <property type="match status" value="1"/>
</dbReference>
<dbReference type="FunFam" id="1.20.1270.20:FF:000001">
    <property type="entry name" value="Hydroxylamine reductase"/>
    <property type="match status" value="1"/>
</dbReference>
<dbReference type="FunFam" id="1.20.1270.20:FF:000002">
    <property type="entry name" value="Hydroxylamine reductase"/>
    <property type="match status" value="1"/>
</dbReference>
<dbReference type="FunFam" id="3.40.50.2030:FF:000001">
    <property type="entry name" value="Hydroxylamine reductase"/>
    <property type="match status" value="1"/>
</dbReference>
<dbReference type="FunFam" id="3.40.50.2030:FF:000002">
    <property type="entry name" value="Hydroxylamine reductase"/>
    <property type="match status" value="1"/>
</dbReference>
<dbReference type="Gene3D" id="1.20.1270.20">
    <property type="match status" value="2"/>
</dbReference>
<dbReference type="Gene3D" id="3.40.50.2030">
    <property type="match status" value="2"/>
</dbReference>
<dbReference type="HAMAP" id="MF_00069">
    <property type="entry name" value="Hydroxylam_reduct"/>
    <property type="match status" value="1"/>
</dbReference>
<dbReference type="InterPro" id="IPR004137">
    <property type="entry name" value="HCP/CODH"/>
</dbReference>
<dbReference type="InterPro" id="IPR010048">
    <property type="entry name" value="Hydroxylam_reduct"/>
</dbReference>
<dbReference type="InterPro" id="IPR016099">
    <property type="entry name" value="Prismane-like_a/b-sand"/>
</dbReference>
<dbReference type="InterPro" id="IPR011254">
    <property type="entry name" value="Prismane-like_sf"/>
</dbReference>
<dbReference type="InterPro" id="IPR016100">
    <property type="entry name" value="Prismane_a-bundle"/>
</dbReference>
<dbReference type="NCBIfam" id="TIGR01703">
    <property type="entry name" value="hybrid_clust"/>
    <property type="match status" value="1"/>
</dbReference>
<dbReference type="NCBIfam" id="NF003658">
    <property type="entry name" value="PRK05290.1"/>
    <property type="match status" value="1"/>
</dbReference>
<dbReference type="PANTHER" id="PTHR30109">
    <property type="entry name" value="HYDROXYLAMINE REDUCTASE"/>
    <property type="match status" value="1"/>
</dbReference>
<dbReference type="PANTHER" id="PTHR30109:SF0">
    <property type="entry name" value="HYDROXYLAMINE REDUCTASE"/>
    <property type="match status" value="1"/>
</dbReference>
<dbReference type="Pfam" id="PF03063">
    <property type="entry name" value="Prismane"/>
    <property type="match status" value="1"/>
</dbReference>
<dbReference type="PIRSF" id="PIRSF000076">
    <property type="entry name" value="HCP"/>
    <property type="match status" value="1"/>
</dbReference>
<dbReference type="SUPFAM" id="SSF56821">
    <property type="entry name" value="Prismane protein-like"/>
    <property type="match status" value="1"/>
</dbReference>
<proteinExistence type="inferred from homology"/>
<sequence>MFCVQCEQTIRTPAGNGCSYAQGMCGKTAETSDLQDLLIAALQGLSAWAVKAREYGIINHDVDSFAPRAFFSTLTNVNFDSPRIVGYAREAIALREALKAQCLAVDANARVDNPMANLQLVSDDLGELQRQAAEFTPNKDKAAIGENILGLRLLCLYGLKGAAAYMEHAHVLGQYDNDIYAQYHKIMAWLGTWPADMNALLECSMEIGQMNFKVMSILDAGETGKYGHPTPTQVNVKATAGKCILISGHDLKDLYNLLEQTEGTGVNVYTHGEMLPAHGYPELRKFKHLVGNYGSGWQNQQVEFARFPGPIVMTSNCIIDPTVGAYDDRIWTRSIVGWPGVRHLDGEDFSAVIAQAQQMAGFPYSEIPHLITVGFGRQTLLGAADTLIDLVSREKLRHIFLLGGCDGARGERHYFTDFATSVPDDCLILTLACGKYRFNKLEFGDIEGLPRLVDAGQCNDAYSAIILAVTLAEKLGCGVNDLPLSLVLSWFEQKAIVILLTLLSLGVKNIVTGPTAPGFLTPDLLAVLNEKFGLRSITTVEEDMKQLLSA</sequence>
<feature type="chain" id="PRO_1000057462" description="Hydroxylamine reductase">
    <location>
        <begin position="1"/>
        <end position="550"/>
    </location>
</feature>
<feature type="binding site" evidence="1">
    <location>
        <position position="3"/>
    </location>
    <ligand>
        <name>[2Fe-2S] cluster</name>
        <dbReference type="ChEBI" id="CHEBI:190135"/>
    </ligand>
</feature>
<feature type="binding site" evidence="1">
    <location>
        <position position="6"/>
    </location>
    <ligand>
        <name>[2Fe-2S] cluster</name>
        <dbReference type="ChEBI" id="CHEBI:190135"/>
    </ligand>
</feature>
<feature type="binding site" evidence="1">
    <location>
        <position position="18"/>
    </location>
    <ligand>
        <name>[2Fe-2S] cluster</name>
        <dbReference type="ChEBI" id="CHEBI:190135"/>
    </ligand>
</feature>
<feature type="binding site" evidence="1">
    <location>
        <position position="25"/>
    </location>
    <ligand>
        <name>[2Fe-2S] cluster</name>
        <dbReference type="ChEBI" id="CHEBI:190135"/>
    </ligand>
</feature>
<feature type="binding site" evidence="1">
    <location>
        <position position="249"/>
    </location>
    <ligand>
        <name>hybrid [4Fe-2O-2S] cluster</name>
        <dbReference type="ChEBI" id="CHEBI:60519"/>
    </ligand>
</feature>
<feature type="binding site" evidence="1">
    <location>
        <position position="273"/>
    </location>
    <ligand>
        <name>hybrid [4Fe-2O-2S] cluster</name>
        <dbReference type="ChEBI" id="CHEBI:60519"/>
    </ligand>
</feature>
<feature type="binding site" evidence="1">
    <location>
        <position position="317"/>
    </location>
    <ligand>
        <name>hybrid [4Fe-2O-2S] cluster</name>
        <dbReference type="ChEBI" id="CHEBI:60519"/>
    </ligand>
</feature>
<feature type="binding site" description="via persulfide group" evidence="1">
    <location>
        <position position="405"/>
    </location>
    <ligand>
        <name>hybrid [4Fe-2O-2S] cluster</name>
        <dbReference type="ChEBI" id="CHEBI:60519"/>
    </ligand>
</feature>
<feature type="binding site" evidence="1">
    <location>
        <position position="433"/>
    </location>
    <ligand>
        <name>hybrid [4Fe-2O-2S] cluster</name>
        <dbReference type="ChEBI" id="CHEBI:60519"/>
    </ligand>
</feature>
<feature type="binding site" evidence="1">
    <location>
        <position position="458"/>
    </location>
    <ligand>
        <name>hybrid [4Fe-2O-2S] cluster</name>
        <dbReference type="ChEBI" id="CHEBI:60519"/>
    </ligand>
</feature>
<feature type="binding site" evidence="1">
    <location>
        <position position="492"/>
    </location>
    <ligand>
        <name>hybrid [4Fe-2O-2S] cluster</name>
        <dbReference type="ChEBI" id="CHEBI:60519"/>
    </ligand>
</feature>
<feature type="binding site" evidence="1">
    <location>
        <position position="494"/>
    </location>
    <ligand>
        <name>hybrid [4Fe-2O-2S] cluster</name>
        <dbReference type="ChEBI" id="CHEBI:60519"/>
    </ligand>
</feature>
<feature type="modified residue" description="Cysteine persulfide" evidence="1">
    <location>
        <position position="405"/>
    </location>
</feature>
<protein>
    <recommendedName>
        <fullName evidence="1">Hydroxylamine reductase</fullName>
        <ecNumber evidence="1">1.7.99.1</ecNumber>
    </recommendedName>
    <alternativeName>
        <fullName evidence="1">Hybrid-cluster protein</fullName>
        <shortName evidence="1">HCP</shortName>
    </alternativeName>
    <alternativeName>
        <fullName evidence="1">Prismane protein</fullName>
    </alternativeName>
</protein>
<name>HCP_ECO24</name>
<gene>
    <name evidence="1" type="primary">hcp</name>
    <name type="ordered locus">EcE24377A_0946</name>
</gene>
<comment type="function">
    <text evidence="1">Catalyzes the reduction of hydroxylamine to form NH(3) and H(2)O.</text>
</comment>
<comment type="catalytic activity">
    <reaction evidence="1">
        <text>A + NH4(+) + H2O = hydroxylamine + AH2 + H(+)</text>
        <dbReference type="Rhea" id="RHEA:22052"/>
        <dbReference type="ChEBI" id="CHEBI:13193"/>
        <dbReference type="ChEBI" id="CHEBI:15377"/>
        <dbReference type="ChEBI" id="CHEBI:15378"/>
        <dbReference type="ChEBI" id="CHEBI:15429"/>
        <dbReference type="ChEBI" id="CHEBI:17499"/>
        <dbReference type="ChEBI" id="CHEBI:28938"/>
        <dbReference type="EC" id="1.7.99.1"/>
    </reaction>
</comment>
<comment type="cofactor">
    <cofactor evidence="1">
        <name>[2Fe-2S] cluster</name>
        <dbReference type="ChEBI" id="CHEBI:190135"/>
    </cofactor>
    <text evidence="1">Binds 1 [2Fe-2S] cluster.</text>
</comment>
<comment type="cofactor">
    <cofactor evidence="1">
        <name>hybrid [4Fe-2O-2S] cluster</name>
        <dbReference type="ChEBI" id="CHEBI:60519"/>
    </cofactor>
    <text evidence="1">Binds 1 hybrid [4Fe-2O-2S] cluster.</text>
</comment>
<comment type="subcellular location">
    <subcellularLocation>
        <location evidence="1">Cytoplasm</location>
    </subcellularLocation>
</comment>
<comment type="similarity">
    <text evidence="1">Belongs to the HCP family.</text>
</comment>
<accession>A7ZJU2</accession>